<proteinExistence type="evidence at transcript level"/>
<dbReference type="EMBL" id="FO080330">
    <property type="protein sequence ID" value="CCD62907.1"/>
    <property type="molecule type" value="Genomic_DNA"/>
</dbReference>
<dbReference type="PIR" id="T15405">
    <property type="entry name" value="T15405"/>
</dbReference>
<dbReference type="RefSeq" id="NP_508090.2">
    <property type="nucleotide sequence ID" value="NM_075689.6"/>
</dbReference>
<dbReference type="BioGRID" id="45344">
    <property type="interactions" value="4"/>
</dbReference>
<dbReference type="FunCoup" id="Q11193">
    <property type="interactions" value="545"/>
</dbReference>
<dbReference type="STRING" id="6239.C04E7.2.1"/>
<dbReference type="PaxDb" id="6239-C04E7.2"/>
<dbReference type="PeptideAtlas" id="Q11193"/>
<dbReference type="EnsemblMetazoa" id="C04E7.2.1">
    <property type="protein sequence ID" value="C04E7.2.1"/>
    <property type="gene ID" value="WBGene00015429"/>
</dbReference>
<dbReference type="GeneID" id="180391"/>
<dbReference type="KEGG" id="cel:CELE_C04E7.2"/>
<dbReference type="UCSC" id="C04E7.2">
    <property type="organism name" value="c. elegans"/>
</dbReference>
<dbReference type="AGR" id="WB:WBGene00015429"/>
<dbReference type="CTD" id="180391"/>
<dbReference type="WormBase" id="C04E7.2">
    <property type="protein sequence ID" value="CE40683"/>
    <property type="gene ID" value="WBGene00015429"/>
    <property type="gene designation" value="sor-3"/>
</dbReference>
<dbReference type="eggNOG" id="ENOG502TI3R">
    <property type="taxonomic scope" value="Eukaryota"/>
</dbReference>
<dbReference type="GeneTree" id="ENSGT00970000197491"/>
<dbReference type="HOGENOM" id="CLU_513128_0_0_1"/>
<dbReference type="InParanoid" id="Q11193"/>
<dbReference type="OMA" id="IPEYSAC"/>
<dbReference type="OrthoDB" id="5912862at2759"/>
<dbReference type="PRO" id="PR:Q11193"/>
<dbReference type="Proteomes" id="UP000001940">
    <property type="component" value="Chromosome X"/>
</dbReference>
<dbReference type="Bgee" id="WBGene00015429">
    <property type="expression patterns" value="Expressed in pharyngeal muscle cell (C elegans) and 4 other cell types or tissues"/>
</dbReference>
<dbReference type="GO" id="GO:0005737">
    <property type="term" value="C:cytoplasm"/>
    <property type="evidence" value="ECO:0000314"/>
    <property type="project" value="WormBase"/>
</dbReference>
<dbReference type="GO" id="GO:0005634">
    <property type="term" value="C:nucleus"/>
    <property type="evidence" value="ECO:0000314"/>
    <property type="project" value="WormBase"/>
</dbReference>
<dbReference type="GO" id="GO:0003682">
    <property type="term" value="F:chromatin binding"/>
    <property type="evidence" value="ECO:0000318"/>
    <property type="project" value="GO_Central"/>
</dbReference>
<dbReference type="GO" id="GO:0042393">
    <property type="term" value="F:histone binding"/>
    <property type="evidence" value="ECO:0000318"/>
    <property type="project" value="GO_Central"/>
</dbReference>
<dbReference type="GO" id="GO:0009952">
    <property type="term" value="P:anterior/posterior pattern specification"/>
    <property type="evidence" value="ECO:0000315"/>
    <property type="project" value="WormBase"/>
</dbReference>
<dbReference type="GO" id="GO:0007411">
    <property type="term" value="P:axon guidance"/>
    <property type="evidence" value="ECO:0000315"/>
    <property type="project" value="WormBase"/>
</dbReference>
<dbReference type="GO" id="GO:0045892">
    <property type="term" value="P:negative regulation of DNA-templated transcription"/>
    <property type="evidence" value="ECO:0000315"/>
    <property type="project" value="WormBase"/>
</dbReference>
<dbReference type="GO" id="GO:0040015">
    <property type="term" value="P:negative regulation of multicellular organism growth"/>
    <property type="evidence" value="ECO:0000315"/>
    <property type="project" value="WormBase"/>
</dbReference>
<dbReference type="GO" id="GO:0002119">
    <property type="term" value="P:nematode larval development"/>
    <property type="evidence" value="ECO:0000316"/>
    <property type="project" value="WormBase"/>
</dbReference>
<dbReference type="GO" id="GO:0048665">
    <property type="term" value="P:neuron fate specification"/>
    <property type="evidence" value="ECO:0000315"/>
    <property type="project" value="WormBase"/>
</dbReference>
<dbReference type="GO" id="GO:0030334">
    <property type="term" value="P:regulation of cell migration"/>
    <property type="evidence" value="ECO:0000315"/>
    <property type="project" value="WormBase"/>
</dbReference>
<dbReference type="CDD" id="cd20088">
    <property type="entry name" value="MBT"/>
    <property type="match status" value="1"/>
</dbReference>
<dbReference type="Gene3D" id="2.30.30.140">
    <property type="match status" value="1"/>
</dbReference>
<dbReference type="InterPro" id="IPR004092">
    <property type="entry name" value="Mbt"/>
</dbReference>
<dbReference type="Pfam" id="PF02820">
    <property type="entry name" value="MBT"/>
    <property type="match status" value="1"/>
</dbReference>
<dbReference type="SUPFAM" id="SSF63748">
    <property type="entry name" value="Tudor/PWWP/MBT"/>
    <property type="match status" value="1"/>
</dbReference>
<name>SOR3_CAEEL</name>
<protein>
    <recommendedName>
        <fullName>Sop-2-related protein 3</fullName>
    </recommendedName>
</protein>
<evidence type="ECO:0000269" key="1">
    <source>
    </source>
</evidence>
<feature type="chain" id="PRO_0000065135" description="Sop-2-related protein 3">
    <location>
        <begin position="1"/>
        <end position="531"/>
    </location>
</feature>
<accession>Q11193</accession>
<keyword id="KW-0963">Cytoplasm</keyword>
<keyword id="KW-0217">Developmental protein</keyword>
<keyword id="KW-0221">Differentiation</keyword>
<keyword id="KW-0524">Neurogenesis</keyword>
<keyword id="KW-0539">Nucleus</keyword>
<keyword id="KW-1185">Reference proteome</keyword>
<keyword id="KW-0678">Repressor</keyword>
<keyword id="KW-0804">Transcription</keyword>
<keyword id="KW-0805">Transcription regulation</keyword>
<sequence length="531" mass="61730">MDTTNQSEDIKPCDSDLMESILMFDEPISDILAHNKLWISHARTRSNFFPQEGRHISNQHTEAATSLKMWMLSKNLVVIVKRKDDIFPCKILTRNPENLFVARFLESGKEKHIQVEYSDIIMTRSELEKALPLCQHLIPARNWDDFYIIRDFEKATPYFEQGLSALVKPGQQFELQLEDAPDFYVMATVVKNYRGFLLVEYQNFKRWIHMLSPYCHEIGWGKNEKQEYLKRGPYNRHMNVDLVAGLVKQSTNQKLGAVPEIVFRNNCPVPHRIPEYSACVYLDLDQKRFYFAHKVTTKTCRNNRHFFNISIGKNLVTSKQNNRPYEFHVYHPRILPYSVAKRMEVQIILPPDVKLLPDESNLDGYLRTYCNPCDKHKTSDRVQPSPKIAKKKNGPLLLDDTPDAMFRSRPLLGDNIGAHKEWTNFMNHIPDYKRKDLLKSMDTLKFCEIFRPTPTGALQLTAAEVTGQQECMLRLKVSGEDEPVYIHNADPHLYHLGACLDMELAINFHGEFFDEKPLKKNKNANNGFSSF</sequence>
<comment type="function">
    <text evidence="1">Probably acts synergistically with sop-2 to maintain the transcriptionally repressive state of homeotic genes in order to regulate various neurogenic identities. Specification of some neuronal identities also involves expression of non-Hox genes. Specifies dopaminergic and serotonergic neuronal cell fate, and regulates neurotransmitter choice and axon pathfinding.</text>
</comment>
<comment type="subcellular location">
    <subcellularLocation>
        <location evidence="1">Cytoplasm</location>
    </subcellularLocation>
    <subcellularLocation>
        <location evidence="1">Nucleus</location>
    </subcellularLocation>
</comment>
<comment type="tissue specificity">
    <text evidence="1">Expressed ubiquitously.</text>
</comment>
<comment type="developmental stage">
    <text evidence="1">Expressed in embryos, larvae and adults.</text>
</comment>
<comment type="disruption phenotype">
    <text evidence="1">Worms exhibit ectopic expression of Hox genes and homeotic transformations. Mutants are also long and exhibit defects in distal tip cell migration.</text>
</comment>
<organism>
    <name type="scientific">Caenorhabditis elegans</name>
    <dbReference type="NCBI Taxonomy" id="6239"/>
    <lineage>
        <taxon>Eukaryota</taxon>
        <taxon>Metazoa</taxon>
        <taxon>Ecdysozoa</taxon>
        <taxon>Nematoda</taxon>
        <taxon>Chromadorea</taxon>
        <taxon>Rhabditida</taxon>
        <taxon>Rhabditina</taxon>
        <taxon>Rhabditomorpha</taxon>
        <taxon>Rhabditoidea</taxon>
        <taxon>Rhabditidae</taxon>
        <taxon>Peloderinae</taxon>
        <taxon>Caenorhabditis</taxon>
    </lineage>
</organism>
<reference key="1">
    <citation type="journal article" date="1998" name="Science">
        <title>Genome sequence of the nematode C. elegans: a platform for investigating biology.</title>
        <authorList>
            <consortium name="The C. elegans sequencing consortium"/>
        </authorList>
    </citation>
    <scope>NUCLEOTIDE SEQUENCE [LARGE SCALE GENOMIC DNA]</scope>
    <source>
        <strain>Bristol N2</strain>
    </source>
</reference>
<reference key="2">
    <citation type="journal article" date="2007" name="Proc. Natl. Acad. Sci. U.S.A.">
        <title>Polycomb-like genes are necessary for specification of dopaminergic and serotonergic neurons in Caenorhabditis elegans.</title>
        <authorList>
            <person name="Yang Y."/>
            <person name="Sun Y."/>
            <person name="Luo X."/>
            <person name="Zhang Y."/>
            <person name="Chen Y."/>
            <person name="Tian E."/>
            <person name="Lints R."/>
            <person name="Zhang H."/>
        </authorList>
    </citation>
    <scope>IDENTIFICATION AS SOR-3</scope>
    <scope>FUNCTION</scope>
    <scope>SUBCELLULAR LOCATION</scope>
    <scope>TISSUE SPECIFICITY</scope>
    <scope>DEVELOPMENTAL STAGE</scope>
    <scope>DISRUPTION PHENOTYPE</scope>
</reference>
<gene>
    <name type="primary">sor-3</name>
    <name type="ORF">C04E7.2</name>
</gene>